<evidence type="ECO:0000255" key="1">
    <source>
        <dbReference type="HAMAP-Rule" id="MF_00409"/>
    </source>
</evidence>
<accession>Q4UV64</accession>
<feature type="chain" id="PRO_0000229987" description="Tetraacyldisaccharide 4'-kinase">
    <location>
        <begin position="1"/>
        <end position="351"/>
    </location>
</feature>
<feature type="binding site" evidence="1">
    <location>
        <begin position="61"/>
        <end position="68"/>
    </location>
    <ligand>
        <name>ATP</name>
        <dbReference type="ChEBI" id="CHEBI:30616"/>
    </ligand>
</feature>
<dbReference type="EC" id="2.7.1.130" evidence="1"/>
<dbReference type="EMBL" id="CP000050">
    <property type="protein sequence ID" value="AAY49059.1"/>
    <property type="molecule type" value="Genomic_DNA"/>
</dbReference>
<dbReference type="RefSeq" id="WP_011037270.1">
    <property type="nucleotide sequence ID" value="NZ_CP155948.1"/>
</dbReference>
<dbReference type="SMR" id="Q4UV64"/>
<dbReference type="KEGG" id="xcb:XC_1996"/>
<dbReference type="HOGENOM" id="CLU_038816_2_0_6"/>
<dbReference type="UniPathway" id="UPA00359">
    <property type="reaction ID" value="UER00482"/>
</dbReference>
<dbReference type="Proteomes" id="UP000000420">
    <property type="component" value="Chromosome"/>
</dbReference>
<dbReference type="GO" id="GO:0005886">
    <property type="term" value="C:plasma membrane"/>
    <property type="evidence" value="ECO:0007669"/>
    <property type="project" value="TreeGrafter"/>
</dbReference>
<dbReference type="GO" id="GO:0005524">
    <property type="term" value="F:ATP binding"/>
    <property type="evidence" value="ECO:0007669"/>
    <property type="project" value="UniProtKB-UniRule"/>
</dbReference>
<dbReference type="GO" id="GO:0009029">
    <property type="term" value="F:tetraacyldisaccharide 4'-kinase activity"/>
    <property type="evidence" value="ECO:0007669"/>
    <property type="project" value="UniProtKB-UniRule"/>
</dbReference>
<dbReference type="GO" id="GO:0009245">
    <property type="term" value="P:lipid A biosynthetic process"/>
    <property type="evidence" value="ECO:0007669"/>
    <property type="project" value="UniProtKB-UniRule"/>
</dbReference>
<dbReference type="GO" id="GO:0009244">
    <property type="term" value="P:lipopolysaccharide core region biosynthetic process"/>
    <property type="evidence" value="ECO:0007669"/>
    <property type="project" value="TreeGrafter"/>
</dbReference>
<dbReference type="HAMAP" id="MF_00409">
    <property type="entry name" value="LpxK"/>
    <property type="match status" value="1"/>
</dbReference>
<dbReference type="InterPro" id="IPR003758">
    <property type="entry name" value="LpxK"/>
</dbReference>
<dbReference type="InterPro" id="IPR027417">
    <property type="entry name" value="P-loop_NTPase"/>
</dbReference>
<dbReference type="NCBIfam" id="TIGR00682">
    <property type="entry name" value="lpxK"/>
    <property type="match status" value="1"/>
</dbReference>
<dbReference type="PANTHER" id="PTHR42724">
    <property type="entry name" value="TETRAACYLDISACCHARIDE 4'-KINASE"/>
    <property type="match status" value="1"/>
</dbReference>
<dbReference type="PANTHER" id="PTHR42724:SF1">
    <property type="entry name" value="TETRAACYLDISACCHARIDE 4'-KINASE, MITOCHONDRIAL-RELATED"/>
    <property type="match status" value="1"/>
</dbReference>
<dbReference type="Pfam" id="PF02606">
    <property type="entry name" value="LpxK"/>
    <property type="match status" value="1"/>
</dbReference>
<dbReference type="SUPFAM" id="SSF52540">
    <property type="entry name" value="P-loop containing nucleoside triphosphate hydrolases"/>
    <property type="match status" value="1"/>
</dbReference>
<protein>
    <recommendedName>
        <fullName evidence="1">Tetraacyldisaccharide 4'-kinase</fullName>
        <ecNumber evidence="1">2.7.1.130</ecNumber>
    </recommendedName>
    <alternativeName>
        <fullName evidence="1">Lipid A 4'-kinase</fullName>
    </alternativeName>
</protein>
<sequence length="351" mass="38210">MSKRGARTPGYWYDNTPIPLPARMLAPVYGAVTAVRRSLYRRGWLKRHGVPVPVVVIGNVTAGGTGKTPLTITLVSRLQQAGWTPGVASRGYGRDDAGTARWVDADTPVALGGDEPVLIAWKTGARVRVDTDRLAAARALVEAGCDIIVCDDGLQHYRLARDVEIEVVDGQRRYGNGRMLPAGPLREPAARARECDFRVVNLGQGSDAVIPVVGTPVADTDAGFGEWQMRLSIDSVQPMDGKRARPLASLAGQRVHAVAGIAHPERFFAMLRARGIGVVPHAFPDHHVYRAQDFSFGSRLPVLMTEKDAVKCRPFADEWLYSVPLKAELPAAFWVSLLDRLDKLASRHSDA</sequence>
<proteinExistence type="inferred from homology"/>
<comment type="function">
    <text evidence="1">Transfers the gamma-phosphate of ATP to the 4'-position of a tetraacyldisaccharide 1-phosphate intermediate (termed DS-1-P) to form tetraacyldisaccharide 1,4'-bis-phosphate (lipid IVA).</text>
</comment>
<comment type="catalytic activity">
    <reaction evidence="1">
        <text>a lipid A disaccharide + ATP = a lipid IVA + ADP + H(+)</text>
        <dbReference type="Rhea" id="RHEA:67840"/>
        <dbReference type="ChEBI" id="CHEBI:15378"/>
        <dbReference type="ChEBI" id="CHEBI:30616"/>
        <dbReference type="ChEBI" id="CHEBI:176343"/>
        <dbReference type="ChEBI" id="CHEBI:176425"/>
        <dbReference type="ChEBI" id="CHEBI:456216"/>
        <dbReference type="EC" id="2.7.1.130"/>
    </reaction>
</comment>
<comment type="pathway">
    <text evidence="1">Glycolipid biosynthesis; lipid IV(A) biosynthesis; lipid IV(A) from (3R)-3-hydroxytetradecanoyl-[acyl-carrier-protein] and UDP-N-acetyl-alpha-D-glucosamine: step 6/6.</text>
</comment>
<comment type="similarity">
    <text evidence="1">Belongs to the LpxK family.</text>
</comment>
<reference key="1">
    <citation type="journal article" date="2005" name="Genome Res.">
        <title>Comparative and functional genomic analyses of the pathogenicity of phytopathogen Xanthomonas campestris pv. campestris.</title>
        <authorList>
            <person name="Qian W."/>
            <person name="Jia Y."/>
            <person name="Ren S.-X."/>
            <person name="He Y.-Q."/>
            <person name="Feng J.-X."/>
            <person name="Lu L.-F."/>
            <person name="Sun Q."/>
            <person name="Ying G."/>
            <person name="Tang D.-J."/>
            <person name="Tang H."/>
            <person name="Wu W."/>
            <person name="Hao P."/>
            <person name="Wang L."/>
            <person name="Jiang B.-L."/>
            <person name="Zeng S."/>
            <person name="Gu W.-Y."/>
            <person name="Lu G."/>
            <person name="Rong L."/>
            <person name="Tian Y."/>
            <person name="Yao Z."/>
            <person name="Fu G."/>
            <person name="Chen B."/>
            <person name="Fang R."/>
            <person name="Qiang B."/>
            <person name="Chen Z."/>
            <person name="Zhao G.-P."/>
            <person name="Tang J.-L."/>
            <person name="He C."/>
        </authorList>
    </citation>
    <scope>NUCLEOTIDE SEQUENCE [LARGE SCALE GENOMIC DNA]</scope>
    <source>
        <strain>8004</strain>
    </source>
</reference>
<organism>
    <name type="scientific">Xanthomonas campestris pv. campestris (strain 8004)</name>
    <dbReference type="NCBI Taxonomy" id="314565"/>
    <lineage>
        <taxon>Bacteria</taxon>
        <taxon>Pseudomonadati</taxon>
        <taxon>Pseudomonadota</taxon>
        <taxon>Gammaproteobacteria</taxon>
        <taxon>Lysobacterales</taxon>
        <taxon>Lysobacteraceae</taxon>
        <taxon>Xanthomonas</taxon>
    </lineage>
</organism>
<name>LPXK_XANC8</name>
<keyword id="KW-0067">ATP-binding</keyword>
<keyword id="KW-0418">Kinase</keyword>
<keyword id="KW-0441">Lipid A biosynthesis</keyword>
<keyword id="KW-0444">Lipid biosynthesis</keyword>
<keyword id="KW-0443">Lipid metabolism</keyword>
<keyword id="KW-0547">Nucleotide-binding</keyword>
<keyword id="KW-0808">Transferase</keyword>
<gene>
    <name evidence="1" type="primary">lpxK</name>
    <name type="ordered locus">XC_1996</name>
</gene>